<reference key="1">
    <citation type="journal article" date="1990" name="Nucleic Acids Res.">
        <title>Isolation and characterization of two novel, closely related ATF cDNA clones from HeLa cells.</title>
        <authorList>
            <person name="Gaire M."/>
            <person name="Chatton B."/>
            <person name="Kedinger C."/>
        </authorList>
    </citation>
    <scope>NUCLEOTIDE SEQUENCE [MRNA] (ISOFORMS 2 AND 3)</scope>
    <source>
        <tissue>Cervix carcinoma</tissue>
    </source>
</reference>
<reference key="2">
    <citation type="submission" date="1990-12" db="EMBL/GenBank/DDBJ databases">
        <title>ATF-a1, a new member of the human ATF family.</title>
        <authorList>
            <person name="Chatton B."/>
            <person name="Gaire M."/>
            <person name="Goetz J."/>
            <person name="Hauss C."/>
            <person name="Kedinger C."/>
        </authorList>
    </citation>
    <scope>NUCLEOTIDE SEQUENCE [MRNA] (ISOFORM 6)</scope>
</reference>
<reference key="3">
    <citation type="journal article" date="1994" name="J. Biol. Chem.">
        <title>ATF-a0, a novel variant of the ATF/CREB transcription factor family, forms a dominant transcription inhibitor in ATF-a heterodimers.</title>
        <authorList>
            <person name="Pescini R."/>
            <person name="Kaszubska W."/>
            <person name="Whelan J."/>
            <person name="DeLamarter J.F."/>
            <person name="Hooft van Huijsduijnen R."/>
        </authorList>
    </citation>
    <scope>NUCLEOTIDE SEQUENCE [MRNA] (ISOFORM 4)</scope>
    <scope>FUNCTION</scope>
    <scope>TISSUE SPECIFICITY</scope>
    <scope>SUBUNIT</scope>
    <source>
        <tissue>Cervix carcinoma</tissue>
    </source>
</reference>
<reference key="4">
    <citation type="journal article" date="2004" name="Nat. Genet.">
        <title>Complete sequencing and characterization of 21,243 full-length human cDNAs.</title>
        <authorList>
            <person name="Ota T."/>
            <person name="Suzuki Y."/>
            <person name="Nishikawa T."/>
            <person name="Otsuki T."/>
            <person name="Sugiyama T."/>
            <person name="Irie R."/>
            <person name="Wakamatsu A."/>
            <person name="Hayashi K."/>
            <person name="Sato H."/>
            <person name="Nagai K."/>
            <person name="Kimura K."/>
            <person name="Makita H."/>
            <person name="Sekine M."/>
            <person name="Obayashi M."/>
            <person name="Nishi T."/>
            <person name="Shibahara T."/>
            <person name="Tanaka T."/>
            <person name="Ishii S."/>
            <person name="Yamamoto J."/>
            <person name="Saito K."/>
            <person name="Kawai Y."/>
            <person name="Isono Y."/>
            <person name="Nakamura Y."/>
            <person name="Nagahari K."/>
            <person name="Murakami K."/>
            <person name="Yasuda T."/>
            <person name="Iwayanagi T."/>
            <person name="Wagatsuma M."/>
            <person name="Shiratori A."/>
            <person name="Sudo H."/>
            <person name="Hosoiri T."/>
            <person name="Kaku Y."/>
            <person name="Kodaira H."/>
            <person name="Kondo H."/>
            <person name="Sugawara M."/>
            <person name="Takahashi M."/>
            <person name="Kanda K."/>
            <person name="Yokoi T."/>
            <person name="Furuya T."/>
            <person name="Kikkawa E."/>
            <person name="Omura Y."/>
            <person name="Abe K."/>
            <person name="Kamihara K."/>
            <person name="Katsuta N."/>
            <person name="Sato K."/>
            <person name="Tanikawa M."/>
            <person name="Yamazaki M."/>
            <person name="Ninomiya K."/>
            <person name="Ishibashi T."/>
            <person name="Yamashita H."/>
            <person name="Murakawa K."/>
            <person name="Fujimori K."/>
            <person name="Tanai H."/>
            <person name="Kimata M."/>
            <person name="Watanabe M."/>
            <person name="Hiraoka S."/>
            <person name="Chiba Y."/>
            <person name="Ishida S."/>
            <person name="Ono Y."/>
            <person name="Takiguchi S."/>
            <person name="Watanabe S."/>
            <person name="Yosida M."/>
            <person name="Hotuta T."/>
            <person name="Kusano J."/>
            <person name="Kanehori K."/>
            <person name="Takahashi-Fujii A."/>
            <person name="Hara H."/>
            <person name="Tanase T.-O."/>
            <person name="Nomura Y."/>
            <person name="Togiya S."/>
            <person name="Komai F."/>
            <person name="Hara R."/>
            <person name="Takeuchi K."/>
            <person name="Arita M."/>
            <person name="Imose N."/>
            <person name="Musashino K."/>
            <person name="Yuuki H."/>
            <person name="Oshima A."/>
            <person name="Sasaki N."/>
            <person name="Aotsuka S."/>
            <person name="Yoshikawa Y."/>
            <person name="Matsunawa H."/>
            <person name="Ichihara T."/>
            <person name="Shiohata N."/>
            <person name="Sano S."/>
            <person name="Moriya S."/>
            <person name="Momiyama H."/>
            <person name="Satoh N."/>
            <person name="Takami S."/>
            <person name="Terashima Y."/>
            <person name="Suzuki O."/>
            <person name="Nakagawa S."/>
            <person name="Senoh A."/>
            <person name="Mizoguchi H."/>
            <person name="Goto Y."/>
            <person name="Shimizu F."/>
            <person name="Wakebe H."/>
            <person name="Hishigaki H."/>
            <person name="Watanabe T."/>
            <person name="Sugiyama A."/>
            <person name="Takemoto M."/>
            <person name="Kawakami B."/>
            <person name="Yamazaki M."/>
            <person name="Watanabe K."/>
            <person name="Kumagai A."/>
            <person name="Itakura S."/>
            <person name="Fukuzumi Y."/>
            <person name="Fujimori Y."/>
            <person name="Komiyama M."/>
            <person name="Tashiro H."/>
            <person name="Tanigami A."/>
            <person name="Fujiwara T."/>
            <person name="Ono T."/>
            <person name="Yamada K."/>
            <person name="Fujii Y."/>
            <person name="Ozaki K."/>
            <person name="Hirao M."/>
            <person name="Ohmori Y."/>
            <person name="Kawabata A."/>
            <person name="Hikiji T."/>
            <person name="Kobatake N."/>
            <person name="Inagaki H."/>
            <person name="Ikema Y."/>
            <person name="Okamoto S."/>
            <person name="Okitani R."/>
            <person name="Kawakami T."/>
            <person name="Noguchi S."/>
            <person name="Itoh T."/>
            <person name="Shigeta K."/>
            <person name="Senba T."/>
            <person name="Matsumura K."/>
            <person name="Nakajima Y."/>
            <person name="Mizuno T."/>
            <person name="Morinaga M."/>
            <person name="Sasaki M."/>
            <person name="Togashi T."/>
            <person name="Oyama M."/>
            <person name="Hata H."/>
            <person name="Watanabe M."/>
            <person name="Komatsu T."/>
            <person name="Mizushima-Sugano J."/>
            <person name="Satoh T."/>
            <person name="Shirai Y."/>
            <person name="Takahashi Y."/>
            <person name="Nakagawa K."/>
            <person name="Okumura K."/>
            <person name="Nagase T."/>
            <person name="Nomura N."/>
            <person name="Kikuchi H."/>
            <person name="Masuho Y."/>
            <person name="Yamashita R."/>
            <person name="Nakai K."/>
            <person name="Yada T."/>
            <person name="Nakamura Y."/>
            <person name="Ohara O."/>
            <person name="Isogai T."/>
            <person name="Sugano S."/>
        </authorList>
    </citation>
    <scope>NUCLEOTIDE SEQUENCE [LARGE SCALE MRNA] (ISOFORM 6)</scope>
</reference>
<reference key="5">
    <citation type="journal article" date="2006" name="Nature">
        <title>The finished DNA sequence of human chromosome 12.</title>
        <authorList>
            <person name="Scherer S.E."/>
            <person name="Muzny D.M."/>
            <person name="Buhay C.J."/>
            <person name="Chen R."/>
            <person name="Cree A."/>
            <person name="Ding Y."/>
            <person name="Dugan-Rocha S."/>
            <person name="Gill R."/>
            <person name="Gunaratne P."/>
            <person name="Harris R.A."/>
            <person name="Hawes A.C."/>
            <person name="Hernandez J."/>
            <person name="Hodgson A.V."/>
            <person name="Hume J."/>
            <person name="Jackson A."/>
            <person name="Khan Z.M."/>
            <person name="Kovar-Smith C."/>
            <person name="Lewis L.R."/>
            <person name="Lozado R.J."/>
            <person name="Metzker M.L."/>
            <person name="Milosavljevic A."/>
            <person name="Miner G.R."/>
            <person name="Montgomery K.T."/>
            <person name="Morgan M.B."/>
            <person name="Nazareth L.V."/>
            <person name="Scott G."/>
            <person name="Sodergren E."/>
            <person name="Song X.-Z."/>
            <person name="Steffen D."/>
            <person name="Lovering R.C."/>
            <person name="Wheeler D.A."/>
            <person name="Worley K.C."/>
            <person name="Yuan Y."/>
            <person name="Zhang Z."/>
            <person name="Adams C.Q."/>
            <person name="Ansari-Lari M.A."/>
            <person name="Ayele M."/>
            <person name="Brown M.J."/>
            <person name="Chen G."/>
            <person name="Chen Z."/>
            <person name="Clerc-Blankenburg K.P."/>
            <person name="Davis C."/>
            <person name="Delgado O."/>
            <person name="Dinh H.H."/>
            <person name="Draper H."/>
            <person name="Gonzalez-Garay M.L."/>
            <person name="Havlak P."/>
            <person name="Jackson L.R."/>
            <person name="Jacob L.S."/>
            <person name="Kelly S.H."/>
            <person name="Li L."/>
            <person name="Li Z."/>
            <person name="Liu J."/>
            <person name="Liu W."/>
            <person name="Lu J."/>
            <person name="Maheshwari M."/>
            <person name="Nguyen B.-V."/>
            <person name="Okwuonu G.O."/>
            <person name="Pasternak S."/>
            <person name="Perez L.M."/>
            <person name="Plopper F.J.H."/>
            <person name="Santibanez J."/>
            <person name="Shen H."/>
            <person name="Tabor P.E."/>
            <person name="Verduzco D."/>
            <person name="Waldron L."/>
            <person name="Wang Q."/>
            <person name="Williams G.A."/>
            <person name="Zhang J."/>
            <person name="Zhou J."/>
            <person name="Allen C.C."/>
            <person name="Amin A.G."/>
            <person name="Anyalebechi V."/>
            <person name="Bailey M."/>
            <person name="Barbaria J.A."/>
            <person name="Bimage K.E."/>
            <person name="Bryant N.P."/>
            <person name="Burch P.E."/>
            <person name="Burkett C.E."/>
            <person name="Burrell K.L."/>
            <person name="Calderon E."/>
            <person name="Cardenas V."/>
            <person name="Carter K."/>
            <person name="Casias K."/>
            <person name="Cavazos I."/>
            <person name="Cavazos S.R."/>
            <person name="Ceasar H."/>
            <person name="Chacko J."/>
            <person name="Chan S.N."/>
            <person name="Chavez D."/>
            <person name="Christopoulos C."/>
            <person name="Chu J."/>
            <person name="Cockrell R."/>
            <person name="Cox C.D."/>
            <person name="Dang M."/>
            <person name="Dathorne S.R."/>
            <person name="David R."/>
            <person name="Davis C.M."/>
            <person name="Davy-Carroll L."/>
            <person name="Deshazo D.R."/>
            <person name="Donlin J.E."/>
            <person name="D'Souza L."/>
            <person name="Eaves K.A."/>
            <person name="Egan A."/>
            <person name="Emery-Cohen A.J."/>
            <person name="Escotto M."/>
            <person name="Flagg N."/>
            <person name="Forbes L.D."/>
            <person name="Gabisi A.M."/>
            <person name="Garza M."/>
            <person name="Hamilton C."/>
            <person name="Henderson N."/>
            <person name="Hernandez O."/>
            <person name="Hines S."/>
            <person name="Hogues M.E."/>
            <person name="Huang M."/>
            <person name="Idlebird D.G."/>
            <person name="Johnson R."/>
            <person name="Jolivet A."/>
            <person name="Jones S."/>
            <person name="Kagan R."/>
            <person name="King L.M."/>
            <person name="Leal B."/>
            <person name="Lebow H."/>
            <person name="Lee S."/>
            <person name="LeVan J.M."/>
            <person name="Lewis L.C."/>
            <person name="London P."/>
            <person name="Lorensuhewa L.M."/>
            <person name="Loulseged H."/>
            <person name="Lovett D.A."/>
            <person name="Lucier A."/>
            <person name="Lucier R.L."/>
            <person name="Ma J."/>
            <person name="Madu R.C."/>
            <person name="Mapua P."/>
            <person name="Martindale A.D."/>
            <person name="Martinez E."/>
            <person name="Massey E."/>
            <person name="Mawhiney S."/>
            <person name="Meador M.G."/>
            <person name="Mendez S."/>
            <person name="Mercado C."/>
            <person name="Mercado I.C."/>
            <person name="Merritt C.E."/>
            <person name="Miner Z.L."/>
            <person name="Minja E."/>
            <person name="Mitchell T."/>
            <person name="Mohabbat F."/>
            <person name="Mohabbat K."/>
            <person name="Montgomery B."/>
            <person name="Moore N."/>
            <person name="Morris S."/>
            <person name="Munidasa M."/>
            <person name="Ngo R.N."/>
            <person name="Nguyen N.B."/>
            <person name="Nickerson E."/>
            <person name="Nwaokelemeh O.O."/>
            <person name="Nwokenkwo S."/>
            <person name="Obregon M."/>
            <person name="Oguh M."/>
            <person name="Oragunye N."/>
            <person name="Oviedo R.J."/>
            <person name="Parish B.J."/>
            <person name="Parker D.N."/>
            <person name="Parrish J."/>
            <person name="Parks K.L."/>
            <person name="Paul H.A."/>
            <person name="Payton B.A."/>
            <person name="Perez A."/>
            <person name="Perrin W."/>
            <person name="Pickens A."/>
            <person name="Primus E.L."/>
            <person name="Pu L.-L."/>
            <person name="Puazo M."/>
            <person name="Quiles M.M."/>
            <person name="Quiroz J.B."/>
            <person name="Rabata D."/>
            <person name="Reeves K."/>
            <person name="Ruiz S.J."/>
            <person name="Shao H."/>
            <person name="Sisson I."/>
            <person name="Sonaike T."/>
            <person name="Sorelle R.P."/>
            <person name="Sutton A.E."/>
            <person name="Svatek A.F."/>
            <person name="Svetz L.A."/>
            <person name="Tamerisa K.S."/>
            <person name="Taylor T.R."/>
            <person name="Teague B."/>
            <person name="Thomas N."/>
            <person name="Thorn R.D."/>
            <person name="Trejos Z.Y."/>
            <person name="Trevino B.K."/>
            <person name="Ukegbu O.N."/>
            <person name="Urban J.B."/>
            <person name="Vasquez L.I."/>
            <person name="Vera V.A."/>
            <person name="Villasana D.M."/>
            <person name="Wang L."/>
            <person name="Ward-Moore S."/>
            <person name="Warren J.T."/>
            <person name="Wei X."/>
            <person name="White F."/>
            <person name="Williamson A.L."/>
            <person name="Wleczyk R."/>
            <person name="Wooden H.S."/>
            <person name="Wooden S.H."/>
            <person name="Yen J."/>
            <person name="Yoon L."/>
            <person name="Yoon V."/>
            <person name="Zorrilla S.E."/>
            <person name="Nelson D."/>
            <person name="Kucherlapati R."/>
            <person name="Weinstock G."/>
            <person name="Gibbs R.A."/>
        </authorList>
    </citation>
    <scope>NUCLEOTIDE SEQUENCE [LARGE SCALE GENOMIC DNA]</scope>
</reference>
<reference key="6">
    <citation type="submission" date="2005-07" db="EMBL/GenBank/DDBJ databases">
        <authorList>
            <person name="Mural R.J."/>
            <person name="Istrail S."/>
            <person name="Sutton G.G."/>
            <person name="Florea L."/>
            <person name="Halpern A.L."/>
            <person name="Mobarry C.M."/>
            <person name="Lippert R."/>
            <person name="Walenz B."/>
            <person name="Shatkay H."/>
            <person name="Dew I."/>
            <person name="Miller J.R."/>
            <person name="Flanigan M.J."/>
            <person name="Edwards N.J."/>
            <person name="Bolanos R."/>
            <person name="Fasulo D."/>
            <person name="Halldorsson B.V."/>
            <person name="Hannenhalli S."/>
            <person name="Turner R."/>
            <person name="Yooseph S."/>
            <person name="Lu F."/>
            <person name="Nusskern D.R."/>
            <person name="Shue B.C."/>
            <person name="Zheng X.H."/>
            <person name="Zhong F."/>
            <person name="Delcher A.L."/>
            <person name="Huson D.H."/>
            <person name="Kravitz S.A."/>
            <person name="Mouchard L."/>
            <person name="Reinert K."/>
            <person name="Remington K.A."/>
            <person name="Clark A.G."/>
            <person name="Waterman M.S."/>
            <person name="Eichler E.E."/>
            <person name="Adams M.D."/>
            <person name="Hunkapiller M.W."/>
            <person name="Myers E.W."/>
            <person name="Venter J.C."/>
        </authorList>
    </citation>
    <scope>NUCLEOTIDE SEQUENCE [LARGE SCALE GENOMIC DNA]</scope>
</reference>
<reference key="7">
    <citation type="journal article" date="2004" name="Genome Res.">
        <title>The status, quality, and expansion of the NIH full-length cDNA project: the Mammalian Gene Collection (MGC).</title>
        <authorList>
            <consortium name="The MGC Project Team"/>
        </authorList>
    </citation>
    <scope>NUCLEOTIDE SEQUENCE [LARGE SCALE MRNA] (ISOFORMS 1 AND 5)</scope>
    <source>
        <tissue>Brain</tissue>
        <tissue>Colon</tissue>
    </source>
</reference>
<reference key="8">
    <citation type="journal article" date="1991" name="Proc. Natl. Acad. Sci. U.S.A.">
        <title>Cross-family dimerization of transcription factors Fos/Jun and ATF/CREB alters DNA binding specificity.</title>
        <authorList>
            <person name="Hai T."/>
            <person name="Curran T."/>
        </authorList>
    </citation>
    <scope>SUBUNIT</scope>
    <scope>FUNCTION</scope>
</reference>
<reference key="9">
    <citation type="journal article" date="1993" name="Mol. Cell. Biol.">
        <title>Transcriptional activation by the adenovirus larger E1a product is mediated by members of the cellular transcription factor ATF family which can directly associate with E1a.</title>
        <authorList>
            <person name="Chatton B."/>
            <person name="Bocco J.L."/>
            <person name="Gaire M."/>
            <person name="Hauss C."/>
            <person name="Reimund B."/>
            <person name="Goetz J."/>
            <person name="Kedinger C."/>
        </authorList>
    </citation>
    <scope>INTERACTION WITH HUMAN ADENOVIRUS 2 E1A (MICROBIAL INFECTION)</scope>
    <scope>ZINC-BINDING</scope>
    <scope>MUTAGENESIS OF ASP-22 AND HIS-27</scope>
</reference>
<reference key="10">
    <citation type="journal article" date="1994" name="Oncogene">
        <title>Jun and Fos heterodimerize with ATFa, a member of the ATF/CREB family and modulate its transcriptional activity.</title>
        <authorList>
            <person name="Chatton B."/>
            <person name="Bocco J.L."/>
            <person name="Goetz J."/>
            <person name="Gaire M."/>
            <person name="Lutz Y."/>
            <person name="Kedinger C."/>
        </authorList>
    </citation>
    <scope>SUBUNIT</scope>
</reference>
<reference key="11">
    <citation type="journal article" date="1999" name="Oncogene">
        <title>Role of the ATFa/JNK2 complex in Jun activation.</title>
        <authorList>
            <person name="De Graeve F."/>
            <person name="Bahr A."/>
            <person name="Sabapathy K.T."/>
            <person name="Hauss C."/>
            <person name="Wagner E.F."/>
            <person name="Kedinger C."/>
            <person name="Chatton B."/>
        </authorList>
    </citation>
    <scope>INTERACTION WITH JUN; MAPK9 AND HUMAN ADENOVIRUS 2 E1A (MICROBIAL INFECTION)</scope>
    <scope>SUBUNIT</scope>
    <scope>MUTAGENESIS OF CYS-14; THR-51; THR-53; THR-101; THR-145 AND THR-147</scope>
</reference>
<reference key="12">
    <citation type="journal article" date="2005" name="Oncogene">
        <title>A functional interaction between ATF7 and TAF12 that is modulated by TAF4.</title>
        <authorList>
            <person name="Hamard P.J."/>
            <person name="Dalbies-Tran R."/>
            <person name="Hauss C."/>
            <person name="Davidson I."/>
            <person name="Kedinger C."/>
            <person name="Chatton B."/>
        </authorList>
    </citation>
    <scope>INTERACTION WITH TAF4 AND TAF12</scope>
    <scope>TRANSACTIVATION DOMAIN</scope>
    <scope>MUTAGENESIS OF CYS-9; MET-33; LEU-35; THR-51 AND THR-53</scope>
</reference>
<reference key="13">
    <citation type="journal article" date="2007" name="Nucleic Acids Res.">
        <title>Sumoylation delays the ATF7 transcription factor subcellular localization and inhibits its transcriptional activity.</title>
        <authorList>
            <person name="Hamard P.J."/>
            <person name="Boyer-Guittaut M."/>
            <person name="Camuzeaux B."/>
            <person name="Dujardin D."/>
            <person name="Hauss C."/>
            <person name="Oelgeschlager T."/>
            <person name="Vigneron M."/>
            <person name="Kedinger C."/>
            <person name="Chatton B."/>
        </authorList>
    </citation>
    <scope>SUMOYLATION AT LYS-107</scope>
    <scope>SUBCELLULAR LOCATION</scope>
    <scope>INTERACTION WITH TAF12</scope>
</reference>
<reference key="14">
    <citation type="journal article" date="2008" name="J. Mol. Biol.">
        <title>p38beta2-mediated phosphorylation and sumoylation of ATF7 are mutually exclusive.</title>
        <authorList>
            <person name="Camuzeaux B."/>
            <person name="Diring J."/>
            <person name="Hamard P.J."/>
            <person name="Oulad-Abdelghani M."/>
            <person name="Donzeau M."/>
            <person name="Vigneron M."/>
            <person name="Kedinger C."/>
            <person name="Chatton B."/>
        </authorList>
    </citation>
    <scope>PHOSPHORYLATION AT THR-51; THR-53 AND THR-101</scope>
    <scope>SUMOYLATION AT LYS-107</scope>
    <scope>MUTAGENESIS OF THR-51; THR-53; THR-101 AND LYS-107</scope>
    <scope>FUNCTION</scope>
</reference>
<reference key="15">
    <citation type="journal article" date="2008" name="Proc. Natl. Acad. Sci. U.S.A.">
        <title>A quantitative atlas of mitotic phosphorylation.</title>
        <authorList>
            <person name="Dephoure N."/>
            <person name="Zhou C."/>
            <person name="Villen J."/>
            <person name="Beausoleil S.A."/>
            <person name="Bakalarski C.E."/>
            <person name="Elledge S.J."/>
            <person name="Gygi S.P."/>
        </authorList>
    </citation>
    <scope>PHOSPHORYLATION [LARGE SCALE ANALYSIS] AT SER-413</scope>
    <scope>IDENTIFICATION BY MASS SPECTROMETRY [LARGE SCALE ANALYSIS]</scope>
    <source>
        <tissue>Cervix carcinoma</tissue>
    </source>
</reference>
<reference key="16">
    <citation type="journal article" date="2011" name="PLoS ONE">
        <title>A cytoplasmic negative regulator isoform of ATF7 impairs ATF7 and ATF2 phosphorylation and transcriptional activity.</title>
        <authorList>
            <person name="Diring J."/>
            <person name="Camuzeaux B."/>
            <person name="Donzeau M."/>
            <person name="Vigneron M."/>
            <person name="Rosa-Calatrava M."/>
            <person name="Kedinger C."/>
            <person name="Chatton B."/>
        </authorList>
    </citation>
    <scope>FUNCTION (ISOFORM 5)</scope>
    <scope>SUBCELLULAR LOCATION (ISOFORM 5)</scope>
</reference>
<reference key="17">
    <citation type="journal article" date="2011" name="Sci. Signal.">
        <title>System-wide temporal characterization of the proteome and phosphoproteome of human embryonic stem cell differentiation.</title>
        <authorList>
            <person name="Rigbolt K.T."/>
            <person name="Prokhorova T.A."/>
            <person name="Akimov V."/>
            <person name="Henningsen J."/>
            <person name="Johansen P.T."/>
            <person name="Kratchmarova I."/>
            <person name="Kassem M."/>
            <person name="Mann M."/>
            <person name="Olsen J.V."/>
            <person name="Blagoev B."/>
        </authorList>
    </citation>
    <scope>IDENTIFICATION BY MASS SPECTROMETRY [LARGE SCALE ANALYSIS]</scope>
</reference>
<reference key="18">
    <citation type="journal article" date="2013" name="J. Proteome Res.">
        <title>Toward a comprehensive characterization of a human cancer cell phosphoproteome.</title>
        <authorList>
            <person name="Zhou H."/>
            <person name="Di Palma S."/>
            <person name="Preisinger C."/>
            <person name="Peng M."/>
            <person name="Polat A.N."/>
            <person name="Heck A.J."/>
            <person name="Mohammed S."/>
        </authorList>
    </citation>
    <scope>PHOSPHORYLATION [LARGE SCALE ANALYSIS] AT SER-423</scope>
    <scope>IDENTIFICATION BY MASS SPECTROMETRY [LARGE SCALE ANALYSIS]</scope>
    <source>
        <tissue>Erythroleukemia</tissue>
    </source>
</reference>
<reference key="19">
    <citation type="journal article" date="2014" name="J. Proteomics">
        <title>An enzyme assisted RP-RPLC approach for in-depth analysis of human liver phosphoproteome.</title>
        <authorList>
            <person name="Bian Y."/>
            <person name="Song C."/>
            <person name="Cheng K."/>
            <person name="Dong M."/>
            <person name="Wang F."/>
            <person name="Huang J."/>
            <person name="Sun D."/>
            <person name="Wang L."/>
            <person name="Ye M."/>
            <person name="Zou H."/>
        </authorList>
    </citation>
    <scope>PHOSPHORYLATION [LARGE SCALE ANALYSIS] AT SER-413</scope>
    <scope>IDENTIFICATION BY MASS SPECTROMETRY [LARGE SCALE ANALYSIS]</scope>
    <source>
        <tissue>Liver</tissue>
    </source>
</reference>
<reference key="20">
    <citation type="journal article" date="2018" name="Nucleic Acids Res.">
        <title>ATF7 mediates TNF-alpha-induced telomere shortening.</title>
        <authorList>
            <person name="Maekawa T."/>
            <person name="Liu B."/>
            <person name="Nakai D."/>
            <person name="Yoshida K."/>
            <person name="Nakamura K.I."/>
            <person name="Yasukawa M."/>
            <person name="Koike M."/>
            <person name="Takubo K."/>
            <person name="Chatton B."/>
            <person name="Ishikawa F."/>
            <person name="Masutomi K."/>
            <person name="Ishii S."/>
        </authorList>
    </citation>
    <scope>FUNCTION</scope>
    <scope>INTERACTION WITH XRCC6; XRCC7 AND TERT</scope>
    <scope>SUBCELLULAR LOCATION</scope>
    <scope>PHOSPHORYLATION</scope>
</reference>
<gene>
    <name type="primary">ATF7</name>
    <name type="synonym">ATFA</name>
</gene>
<proteinExistence type="evidence at protein level"/>
<feature type="chain" id="PRO_0000076592" description="Cyclic AMP-dependent transcription factor ATF-7">
    <location>
        <begin position="1"/>
        <end position="483"/>
    </location>
</feature>
<feature type="domain" description="bZIP" evidence="3">
    <location>
        <begin position="332"/>
        <end position="395"/>
    </location>
</feature>
<feature type="zinc finger region" description="C2H2-type" evidence="2">
    <location>
        <begin position="7"/>
        <end position="31"/>
    </location>
</feature>
<feature type="region of interest" description="Transactivation domain">
    <location>
        <begin position="1"/>
        <end position="285"/>
    </location>
</feature>
<feature type="region of interest" description="Disordered" evidence="4">
    <location>
        <begin position="110"/>
        <end position="148"/>
    </location>
</feature>
<feature type="region of interest" description="Disordered" evidence="4">
    <location>
        <begin position="299"/>
        <end position="345"/>
    </location>
</feature>
<feature type="region of interest" description="Essential for binding adenovirus 2 E1A">
    <location>
        <begin position="325"/>
        <end position="483"/>
    </location>
</feature>
<feature type="region of interest" description="Basic motif" evidence="3">
    <location>
        <begin position="334"/>
        <end position="354"/>
    </location>
</feature>
<feature type="region of interest" description="Leucine-zipper" evidence="3">
    <location>
        <begin position="360"/>
        <end position="388"/>
    </location>
</feature>
<feature type="region of interest" description="Disordered" evidence="4">
    <location>
        <begin position="407"/>
        <end position="439"/>
    </location>
</feature>
<feature type="compositionally biased region" description="Low complexity" evidence="4">
    <location>
        <begin position="114"/>
        <end position="126"/>
    </location>
</feature>
<feature type="compositionally biased region" description="Low complexity" evidence="4">
    <location>
        <begin position="307"/>
        <end position="320"/>
    </location>
</feature>
<feature type="compositionally biased region" description="Basic and acidic residues" evidence="4">
    <location>
        <begin position="326"/>
        <end position="343"/>
    </location>
</feature>
<feature type="compositionally biased region" description="Polar residues" evidence="4">
    <location>
        <begin position="429"/>
        <end position="439"/>
    </location>
</feature>
<feature type="modified residue" description="Phosphothreonine; by MAPK11" evidence="9">
    <location>
        <position position="51"/>
    </location>
</feature>
<feature type="modified residue" description="Phosphothreonine" evidence="9">
    <location>
        <position position="53"/>
    </location>
</feature>
<feature type="modified residue" description="Phosphothreonine" evidence="9">
    <location>
        <position position="101"/>
    </location>
</feature>
<feature type="modified residue" description="Phosphoserine" evidence="16 18">
    <location>
        <position position="413"/>
    </location>
</feature>
<feature type="modified residue" description="Phosphoserine" evidence="17">
    <location>
        <position position="423"/>
    </location>
</feature>
<feature type="cross-link" description="Glycyl lysine isopeptide (Lys-Gly) (interchain with G-Cter in SUMO1)" evidence="7 9">
    <location>
        <position position="107"/>
    </location>
</feature>
<feature type="splice variant" id="VSP_060697" description="In isoform 6 and isoform 3." evidence="15">
    <original>K</original>
    <variation>KARSRTVAKKLV</variation>
    <location>
        <position position="88"/>
    </location>
</feature>
<feature type="splice variant" id="VSP_060698" description="In isoform 5." evidence="15">
    <original>AAAGPLDMSLPSTPDIKIKEEEPVEVDSS</original>
    <variation>ARSRTVAKKLVVFRPRLFLLCFGIIFLIG</variation>
    <location>
        <begin position="89"/>
        <end position="117"/>
    </location>
</feature>
<feature type="splice variant" id="VSP_060699" description="In isoform 2 and isoform 3." evidence="15">
    <location>
        <begin position="114"/>
        <end position="134"/>
    </location>
</feature>
<feature type="splice variant" id="VSP_060700" description="In isoform 5." evidence="15">
    <location>
        <begin position="118"/>
        <end position="483"/>
    </location>
</feature>
<feature type="splice variant" id="VSP_060701" description="In isoform 4." evidence="15">
    <location>
        <begin position="135"/>
        <end position="310"/>
    </location>
</feature>
<feature type="mutagenesis site" description="Severely reduced TAF12-mediated enhancement of transcriptional activity." evidence="6">
    <original>C</original>
    <variation>A</variation>
    <location>
        <position position="9"/>
    </location>
</feature>
<feature type="mutagenesis site" description="Greatly reduced JNK2- or adenovirus E1A-mediated transactivation. Abolishes adenovirus 2 E1A-mediated transactivation; when associated with A-51; A-53 and G-101." evidence="5">
    <original>C</original>
    <variation>A</variation>
    <location>
        <position position="14"/>
    </location>
</feature>
<feature type="mutagenesis site" description="No effect on binding adenovirus 2 E1A. Abolishes ATF7-mediated E1A responsiveness." evidence="14">
    <original>D</original>
    <variation>K</variation>
    <location>
        <position position="22"/>
    </location>
</feature>
<feature type="mutagenesis site" description="No effect on binding adenovirus 2 E1A. Abolishes ATF7-mediated E1A responsiveness." evidence="14">
    <original>H</original>
    <variation>N</variation>
    <location>
        <position position="27"/>
    </location>
</feature>
<feature type="mutagenesis site" description="Severely reduced TAF12-induced transcriptional activity; when associated with S-35." evidence="6">
    <original>M</original>
    <variation>D</variation>
    <location>
        <position position="33"/>
    </location>
</feature>
<feature type="mutagenesis site" description="Severely reduced TAF12-induced transcriptional activity; when associated with D-33." evidence="6">
    <original>L</original>
    <variation>S</variation>
    <location>
        <position position="35"/>
    </location>
</feature>
<feature type="mutagenesis site" description="Severely reduced TAF12-induced transcriptional activity. No effect on MAPK9-mediated phosphorylation; when associated with A-53. Greatly reduces MAPK9- and adenovirus E1A-mediated transactivation; when associated with A-53 and G-101. Abolishes adenovirus 2 E1A-mediated transactivation; when associated with A-14; A-53 and G-101." evidence="5 6 9">
    <original>T</original>
    <variation>A</variation>
    <location>
        <position position="51"/>
    </location>
</feature>
<feature type="mutagenesis site" description="Completely abolishes MAPK9- and adenovirus E1A-mediated transactivation; when associated with D-53." evidence="5 6 9">
    <original>T</original>
    <variation>D</variation>
    <location>
        <position position="51"/>
    </location>
</feature>
<feature type="mutagenesis site" description="Severely reduced TAF12-induced transcriptional activity. No effect on MAPK9-mediated phosphorylation; when associated with A-51. Greatly reduces MAPK9- and adenovirus E1A-mediated transactivation; when associated with A-51 and G-101. Abolishes adenovirus 2 E1A-mediated transactivation; when associated with A-14; A-51 and G-101." evidence="5 6 9">
    <original>T</original>
    <variation>A</variation>
    <location>
        <position position="53"/>
    </location>
</feature>
<feature type="mutagenesis site" description="Completely abolishes MAPK9- and adenovirus E1A-mediated transactivation; when associated with D-51." evidence="5 6 9">
    <original>T</original>
    <variation>D</variation>
    <location>
        <position position="53"/>
    </location>
</feature>
<feature type="mutagenesis site" description="Some reduction in transactivation but, completely abolishes MAPK9-mediated activation. Abolishes MAPK9-mediated and greatly reduces adenovirus E1A-mediated transactivation; when associated with A-51 and A-53. Abolishes adenovirus 2 E1A-mediated transactivation; when associated with A-14; A-51 and A-53." evidence="5 9">
    <original>T</original>
    <variation>G</variation>
    <location>
        <position position="101"/>
    </location>
</feature>
<feature type="mutagenesis site" description="Abolishes sumoylation. Exclusive nucleoplasmic location. Increase in binding the E-selectin promoter." evidence="9">
    <original>K</original>
    <variation>R</variation>
    <location>
        <position position="107"/>
    </location>
</feature>
<feature type="mutagenesis site" description="No effect on transactivation; when associated with A-147." evidence="5">
    <original>T</original>
    <variation>A</variation>
    <location>
        <position position="145"/>
    </location>
</feature>
<feature type="mutagenesis site" description="No effect on transactivation; when associated with A-145." evidence="5">
    <original>T</original>
    <variation>A</variation>
    <location>
        <position position="147"/>
    </location>
</feature>
<feature type="sequence conflict" description="In Ref. 7; AAH42363." evidence="15" ref="7">
    <original>P</original>
    <variation>T</variation>
    <location>
        <position position="12"/>
    </location>
</feature>
<comment type="function">
    <text evidence="1 11">Stress-responsive chromatin regulator that plays a role in various biological processes including innate immunological memory, adipocyte differentiation or telomerase regulation (PubMed:29490055). In absence of stress, contributes to the formation of heterochromatin and heterochromatin-like structure by recruiting histone H3K9 tri- and di-methyltransferases thus silencing the transcription of target genes such as STAT1 in adipocytes, or genes involved in innate immunity in macrophages and adipocytes (By similarity). Stress induces ATF7 phosphorylation that disrupts interactions with histone methyltransferase and enhances the association with coactivators containing histone acetyltransferase and/or histone demethylase, leading to disruption of the heterochromatin-like structure and subsequently transcriptional activation (By similarity). In response to TNF-alpha, which is induced by various stresses, phosphorylated ATF7 and telomerase are released from telomeres leading to telomere shortening (PubMed:29490055). Also plays a role in maintaining epithelial regenerative capacity and protecting against cell death during intestinal epithelial damage and repair (By similarity).</text>
</comment>
<comment type="function">
    <molecule>Isoform 4</molecule>
    <text>Acts as a dominant repressor of the E-selectin/NF-ELAM1/delta-A promoter.</text>
</comment>
<comment type="function">
    <molecule>Isoform 5</molecule>
    <text evidence="10">Acts as a negative regulator, inhibiting both ATF2 and ATF7 transcriptional activities. It may exert these effects by sequestrating in the cytoplasm the Thr-53 phosphorylating kinase, preventing activation.</text>
</comment>
<comment type="subunit">
    <text evidence="5 6 7 8 11 12 13">Homodimer; binds DNA as homodimer. Heterodimer; heterodimerizes with other members of ATF family and with JUN family members. Interacts with JNK2; the interaction does not phosphorylate ATF7 but acts as a docking site for other ATF-associated partners such as JUN family members. Interacts (via its transactivation domain) with TAF12 (isoforms TAFII15 and TAFII20); the interaction potentiates the transactivation activity (isoform TAFII20 only) and is inhibited by ATF7 sumoylation. Interacts with TAF4; the interaction inhibits the TAF12-dependent transactivation. Interacts with MAPK9; the interaction does not phosphorylate ATF7 but acts as a docking site for ATF7-associated partners such as JUN. Interacts with Ku complex components XRCC6 and XRCC7 (PubMed:29490055). Interacts with TERT (PubMed:29490055).</text>
</comment>
<comment type="subunit">
    <text evidence="5 14">(Microbial infection) Interacts with adenovirus 2 E1A; the interaction enhances the ATF7-mediated viral transactivation activity which requires the zinc-binding domains of both E1A and ATF7.</text>
</comment>
<comment type="interaction">
    <interactant intactId="EBI-765623">
        <id>P17544</id>
    </interactant>
    <interactant intactId="EBI-1170906">
        <id>P15336</id>
        <label>ATF2</label>
    </interactant>
    <organismsDiffer>false</organismsDiffer>
    <experiments>4</experiments>
</comment>
<comment type="interaction">
    <interactant intactId="EBI-765623">
        <id>P17544</id>
    </interactant>
    <interactant intactId="EBI-712767">
        <id>P18847</id>
        <label>ATF3</label>
    </interactant>
    <organismsDiffer>false</organismsDiffer>
    <experiments>3</experiments>
</comment>
<comment type="interaction">
    <interactant intactId="EBI-765623">
        <id>P17544</id>
    </interactant>
    <interactant intactId="EBI-1263541">
        <id>O14867</id>
        <label>BACH1</label>
    </interactant>
    <organismsDiffer>false</organismsDiffer>
    <experiments>3</experiments>
</comment>
<comment type="interaction">
    <interactant intactId="EBI-765623">
        <id>P17544</id>
    </interactant>
    <interactant intactId="EBI-740209">
        <id>P53567</id>
        <label>CEBPG</label>
    </interactant>
    <organismsDiffer>false</organismsDiffer>
    <experiments>2</experiments>
</comment>
<comment type="interaction">
    <interactant intactId="EBI-765623">
        <id>P17544</id>
    </interactant>
    <interactant intactId="EBI-742651">
        <id>P35638</id>
        <label>DDIT3</label>
    </interactant>
    <organismsDiffer>false</organismsDiffer>
    <experiments>2</experiments>
</comment>
<comment type="interaction">
    <interactant intactId="EBI-765623">
        <id>P17544</id>
    </interactant>
    <interactant intactId="EBI-10175124">
        <id>Q8IZU0</id>
        <label>FAM9B</label>
    </interactant>
    <organismsDiffer>false</organismsDiffer>
    <experiments>3</experiments>
</comment>
<comment type="interaction">
    <interactant intactId="EBI-765623">
        <id>P17544</id>
    </interactant>
    <interactant intactId="EBI-10199985">
        <id>P06734</id>
        <label>FCER2</label>
    </interactant>
    <organismsDiffer>false</organismsDiffer>
    <experiments>3</experiments>
</comment>
<comment type="interaction">
    <interactant intactId="EBI-765623">
        <id>P17544</id>
    </interactant>
    <interactant intactId="EBI-852851">
        <id>P01100</id>
        <label>FOS</label>
    </interactant>
    <organismsDiffer>false</organismsDiffer>
    <experiments>5</experiments>
</comment>
<comment type="interaction">
    <interactant intactId="EBI-765623">
        <id>P17544</id>
    </interactant>
    <interactant intactId="EBI-3893419">
        <id>P15408</id>
        <label>FOSL2</label>
    </interactant>
    <organismsDiffer>false</organismsDiffer>
    <experiments>4</experiments>
</comment>
<comment type="interaction">
    <interactant intactId="EBI-765623">
        <id>P17544</id>
    </interactant>
    <interactant intactId="EBI-852823">
        <id>P05412</id>
        <label>JUN</label>
    </interactant>
    <organismsDiffer>false</organismsDiffer>
    <experiments>7</experiments>
</comment>
<comment type="interaction">
    <interactant intactId="EBI-765623">
        <id>P17544</id>
    </interactant>
    <interactant intactId="EBI-748062">
        <id>P17275</id>
        <label>JUNB</label>
    </interactant>
    <organismsDiffer>false</organismsDiffer>
    <experiments>4</experiments>
</comment>
<comment type="interaction">
    <interactant intactId="EBI-765623">
        <id>P17544</id>
    </interactant>
    <interactant intactId="EBI-2682803">
        <id>P17535</id>
        <label>JUND</label>
    </interactant>
    <organismsDiffer>false</organismsDiffer>
    <experiments>2</experiments>
</comment>
<comment type="interaction">
    <interactant intactId="EBI-765623">
        <id>P17544</id>
    </interactant>
    <interactant intactId="EBI-749265">
        <id>Q8N6L0</id>
        <label>KASH5</label>
    </interactant>
    <organismsDiffer>false</organismsDiffer>
    <experiments>3</experiments>
</comment>
<comment type="interaction">
    <interactant intactId="EBI-765623">
        <id>P17544</id>
    </interactant>
    <interactant intactId="EBI-2683029">
        <id>Q9NX40</id>
        <label>OCIAD1</label>
    </interactant>
    <organismsDiffer>false</organismsDiffer>
    <experiments>2</experiments>
</comment>
<comment type="interaction">
    <interactant intactId="EBI-765623">
        <id>P17544</id>
    </interactant>
    <interactant intactId="EBI-9675724">
        <id>Q8WW34</id>
        <label>TMEM239</label>
    </interactant>
    <organismsDiffer>false</organismsDiffer>
    <experiments>3</experiments>
</comment>
<comment type="interaction">
    <interactant intactId="EBI-765623">
        <id>P17544</id>
    </interactant>
    <interactant intactId="EBI-10890294">
        <id>P0C746</id>
        <label>HBZ</label>
    </interactant>
    <organismsDiffer>true</organismsDiffer>
    <experiments>2</experiments>
</comment>
<comment type="interaction">
    <interactant intactId="EBI-765623">
        <id>P17544</id>
    </interactant>
    <interactant intactId="EBI-10889526">
        <id>Q9DGW5</id>
        <label>MDV005</label>
    </interactant>
    <organismsDiffer>true</organismsDiffer>
    <experiments>2</experiments>
</comment>
<comment type="subcellular location">
    <subcellularLocation>
        <location evidence="3 7">Nucleus</location>
    </subcellularLocation>
    <subcellularLocation>
        <location evidence="7">Nucleus</location>
        <location evidence="7">Nucleoplasm</location>
    </subcellularLocation>
    <subcellularLocation>
        <location evidence="11">Chromosome</location>
        <location evidence="11">Telomere</location>
    </subcellularLocation>
    <text>Mainly nucleoplasmic. Restricted distribution to the perinuculear region. The sumoylated form locates to the nuclear periphery.</text>
</comment>
<comment type="subcellular location">
    <molecule>Isoform 5</molecule>
    <subcellularLocation>
        <location evidence="10">Cytoplasm</location>
    </subcellularLocation>
</comment>
<comment type="alternative products">
    <event type="alternative splicing"/>
    <isoform>
        <id>P17544-6</id>
        <name>1</name>
        <sequence type="displayed"/>
    </isoform>
    <isoform>
        <id>P17544-1</id>
        <name>6</name>
        <name>ATF-A1</name>
        <sequence type="described" ref="VSP_060697"/>
    </isoform>
    <isoform>
        <id>P17544-2</id>
        <name>2</name>
        <name>ATF-A</name>
        <sequence type="described" ref="VSP_060699"/>
    </isoform>
    <isoform>
        <id>P17544-3</id>
        <name>3</name>
        <name>ATF-A-delta</name>
        <sequence type="described" ref="VSP_060697 VSP_060699"/>
    </isoform>
    <isoform>
        <id>P17544-4</id>
        <name>4</name>
        <name>ATF-A0</name>
        <sequence type="described" ref="VSP_060701"/>
    </isoform>
    <isoform>
        <id>P17544-5</id>
        <name>5</name>
        <name>ATF-4</name>
        <sequence type="described" ref="VSP_060698 VSP_060700"/>
    </isoform>
</comment>
<comment type="tissue specificity">
    <text evidence="12">Expressed in various tissues including heart, brain, placenta, lung and skeletal muscle. Highest levels in skeletal muscle. Lowest in lung and placenta.</text>
</comment>
<comment type="tissue specificity">
    <molecule>Isoform 4</molecule>
    <text evidence="12">Strongly expressed in skeletal muscle. Also expressed at lower levels in heart and lung.</text>
</comment>
<comment type="PTM">
    <text evidence="9">On EGF stimulation, phosphorylated first on Thr-53 allowing subsequent phosphorylation on Thr-51. This latter phosphorylation prevents sumoylation, increases binding to TAF12 and enhances transcriptional activity.</text>
</comment>
<comment type="PTM">
    <text>Sumoylation delays nuclear localization and inhibits transactivation activity through preventing binding to TAF12. RANBP2 appears to be the specific E3 ligase.</text>
</comment>
<comment type="PTM">
    <text evidence="1 9 11">On EGF stimulation, phosphorylated first on Thr-53 allowing subsequent phosphorylation on Thr-51. This latter phosphorylation prevents sumoylation, increases binding to TAF12 and enhances transcriptional activity (PubMed:18950637). Social isolation stress as well as TNF-alpha also induce the phosphorylation of ATF7 (PubMed:29490055). Phosphorylated in proliferating colonic and small intestinal epithelial cells (By similarity).</text>
</comment>
<comment type="similarity">
    <text evidence="15">Belongs to the bZIP family.</text>
</comment>
<keyword id="KW-0010">Activator</keyword>
<keyword id="KW-0025">Alternative splicing</keyword>
<keyword id="KW-0158">Chromosome</keyword>
<keyword id="KW-0963">Cytoplasm</keyword>
<keyword id="KW-0238">DNA-binding</keyword>
<keyword id="KW-0945">Host-virus interaction</keyword>
<keyword id="KW-1017">Isopeptide bond</keyword>
<keyword id="KW-0479">Metal-binding</keyword>
<keyword id="KW-0539">Nucleus</keyword>
<keyword id="KW-0597">Phosphoprotein</keyword>
<keyword id="KW-1267">Proteomics identification</keyword>
<keyword id="KW-1185">Reference proteome</keyword>
<keyword id="KW-0779">Telomere</keyword>
<keyword id="KW-0804">Transcription</keyword>
<keyword id="KW-0805">Transcription regulation</keyword>
<keyword id="KW-0832">Ubl conjugation</keyword>
<keyword id="KW-0862">Zinc</keyword>
<keyword id="KW-0863">Zinc-finger</keyword>
<name>ATF7_HUMAN</name>
<organism>
    <name type="scientific">Homo sapiens</name>
    <name type="common">Human</name>
    <dbReference type="NCBI Taxonomy" id="9606"/>
    <lineage>
        <taxon>Eukaryota</taxon>
        <taxon>Metazoa</taxon>
        <taxon>Chordata</taxon>
        <taxon>Craniata</taxon>
        <taxon>Vertebrata</taxon>
        <taxon>Euteleostomi</taxon>
        <taxon>Mammalia</taxon>
        <taxon>Eutheria</taxon>
        <taxon>Euarchontoglires</taxon>
        <taxon>Primates</taxon>
        <taxon>Haplorrhini</taxon>
        <taxon>Catarrhini</taxon>
        <taxon>Hominidae</taxon>
        <taxon>Homo</taxon>
    </lineage>
</organism>
<accession>P17544</accession>
<accession>A5D6Y4</accession>
<accession>B2RMP1</accession>
<accession>B4DQL4</accession>
<accession>Q13814</accession>
<accession>Q8IVR8</accession>
<accession>Q9UD83</accession>
<evidence type="ECO:0000250" key="1">
    <source>
        <dbReference type="UniProtKB" id="Q8R0S1"/>
    </source>
</evidence>
<evidence type="ECO:0000255" key="2">
    <source>
        <dbReference type="PROSITE-ProRule" id="PRU00042"/>
    </source>
</evidence>
<evidence type="ECO:0000255" key="3">
    <source>
        <dbReference type="PROSITE-ProRule" id="PRU00978"/>
    </source>
</evidence>
<evidence type="ECO:0000256" key="4">
    <source>
        <dbReference type="SAM" id="MobiDB-lite"/>
    </source>
</evidence>
<evidence type="ECO:0000269" key="5">
    <source>
    </source>
</evidence>
<evidence type="ECO:0000269" key="6">
    <source>
    </source>
</evidence>
<evidence type="ECO:0000269" key="7">
    <source>
    </source>
</evidence>
<evidence type="ECO:0000269" key="8">
    <source>
    </source>
</evidence>
<evidence type="ECO:0000269" key="9">
    <source>
    </source>
</evidence>
<evidence type="ECO:0000269" key="10">
    <source>
    </source>
</evidence>
<evidence type="ECO:0000269" key="11">
    <source>
    </source>
</evidence>
<evidence type="ECO:0000269" key="12">
    <source>
    </source>
</evidence>
<evidence type="ECO:0000269" key="13">
    <source>
    </source>
</evidence>
<evidence type="ECO:0000269" key="14">
    <source>
    </source>
</evidence>
<evidence type="ECO:0000305" key="15"/>
<evidence type="ECO:0007744" key="16">
    <source>
    </source>
</evidence>
<evidence type="ECO:0007744" key="17">
    <source>
    </source>
</evidence>
<evidence type="ECO:0007744" key="18">
    <source>
    </source>
</evidence>
<dbReference type="EMBL" id="X52943">
    <property type="protein sequence ID" value="CAA37118.1"/>
    <property type="molecule type" value="mRNA"/>
</dbReference>
<dbReference type="EMBL" id="X57197">
    <property type="protein sequence ID" value="CAA40483.1"/>
    <property type="molecule type" value="mRNA"/>
</dbReference>
<dbReference type="EMBL" id="AK298853">
    <property type="protein sequence ID" value="BAG60976.1"/>
    <property type="molecule type" value="mRNA"/>
</dbReference>
<dbReference type="EMBL" id="AC023509">
    <property type="status" value="NOT_ANNOTATED_CDS"/>
    <property type="molecule type" value="Genomic_DNA"/>
</dbReference>
<dbReference type="EMBL" id="AC073594">
    <property type="status" value="NOT_ANNOTATED_CDS"/>
    <property type="molecule type" value="Genomic_DNA"/>
</dbReference>
<dbReference type="EMBL" id="CH471054">
    <property type="protein sequence ID" value="EAW96723.1"/>
    <property type="molecule type" value="Genomic_DNA"/>
</dbReference>
<dbReference type="EMBL" id="CH471054">
    <property type="protein sequence ID" value="EAW96724.1"/>
    <property type="molecule type" value="Genomic_DNA"/>
</dbReference>
<dbReference type="EMBL" id="BC042363">
    <property type="protein sequence ID" value="AAH42363.1"/>
    <property type="molecule type" value="mRNA"/>
</dbReference>
<dbReference type="EMBL" id="BC136302">
    <property type="protein sequence ID" value="AAI36303.1"/>
    <property type="molecule type" value="mRNA"/>
</dbReference>
<dbReference type="EMBL" id="BC140006">
    <property type="protein sequence ID" value="AAI40007.1"/>
    <property type="molecule type" value="mRNA"/>
</dbReference>
<dbReference type="CCDS" id="CCDS44905.1">
    <molecule id="P17544-1"/>
</dbReference>
<dbReference type="CCDS" id="CCDS44906.1">
    <molecule id="P17544-6"/>
</dbReference>
<dbReference type="CCDS" id="CCDS58238.1">
    <molecule id="P17544-5"/>
</dbReference>
<dbReference type="PIR" id="S12741">
    <property type="entry name" value="S12741"/>
</dbReference>
<dbReference type="RefSeq" id="NP_001123532.1">
    <molecule id="P17544-2"/>
    <property type="nucleotide sequence ID" value="NM_001130060.2"/>
</dbReference>
<dbReference type="RefSeq" id="NP_001193611.1">
    <molecule id="P17544-5"/>
    <property type="nucleotide sequence ID" value="NM_001206682.2"/>
</dbReference>
<dbReference type="RefSeq" id="NP_001193612.1">
    <molecule id="P17544-5"/>
    <property type="nucleotide sequence ID" value="NM_001206683.1"/>
</dbReference>
<dbReference type="RefSeq" id="NP_001353484.1">
    <molecule id="P17544-1"/>
    <property type="nucleotide sequence ID" value="NM_001366555.2"/>
</dbReference>
<dbReference type="RefSeq" id="NP_001353485.1">
    <molecule id="P17544-6"/>
    <property type="nucleotide sequence ID" value="NM_001366556.2"/>
</dbReference>
<dbReference type="RefSeq" id="NP_001353487.1">
    <molecule id="P17544-6"/>
    <property type="nucleotide sequence ID" value="NM_001366558.2"/>
</dbReference>
<dbReference type="RefSeq" id="NP_001353491.1">
    <molecule id="P17544-5"/>
    <property type="nucleotide sequence ID" value="NM_001366562.2"/>
</dbReference>
<dbReference type="RefSeq" id="NP_006847.1">
    <molecule id="P17544-6"/>
    <property type="nucleotide sequence ID" value="NM_006856.3"/>
</dbReference>
<dbReference type="RefSeq" id="XP_005268644.1">
    <property type="nucleotide sequence ID" value="XM_005268587.3"/>
</dbReference>
<dbReference type="RefSeq" id="XP_016874211.1">
    <property type="nucleotide sequence ID" value="XM_017018722.1"/>
</dbReference>
<dbReference type="SMR" id="P17544"/>
<dbReference type="BioGRID" id="116206">
    <property type="interactions" value="83"/>
</dbReference>
<dbReference type="ComplexPortal" id="CPX-6409">
    <property type="entry name" value="bZIP transcription factor complex, ATF2-ATF7"/>
</dbReference>
<dbReference type="ComplexPortal" id="CPX-6466">
    <property type="entry name" value="bZIP transcription factor complex, ATF3-ATF7"/>
</dbReference>
<dbReference type="ComplexPortal" id="CPX-6721">
    <property type="entry name" value="bZIP transcription factor complex, ATF7-ATF7"/>
</dbReference>
<dbReference type="ComplexPortal" id="CPX-6781">
    <property type="entry name" value="bZIP transcription factor complex, ATF7-BACH1"/>
</dbReference>
<dbReference type="ComplexPortal" id="CPX-6782">
    <property type="entry name" value="bZIP transcription factor complex, ATF7-CEBPG"/>
</dbReference>
<dbReference type="ComplexPortal" id="CPX-6783">
    <property type="entry name" value="bZIP transcription factor complex, ATF7-FOS"/>
</dbReference>
<dbReference type="ComplexPortal" id="CPX-6784">
    <property type="entry name" value="bZIP transcription factor complex, ATF7-DDIT3"/>
</dbReference>
<dbReference type="ComplexPortal" id="CPX-6785">
    <property type="entry name" value="bZIP transcription factor complex, ATF7-FOSL2"/>
</dbReference>
<dbReference type="ComplexPortal" id="CPX-6786">
    <property type="entry name" value="bZIP transcription factor complex, ATF7-JUN"/>
</dbReference>
<dbReference type="ComplexPortal" id="CPX-6787">
    <property type="entry name" value="bZIP transcription factor complex, ATF7-JUNB"/>
</dbReference>
<dbReference type="ComplexPortal" id="CPX-6788">
    <property type="entry name" value="bZIP transcription factor complex, ATF7-JUND"/>
</dbReference>
<dbReference type="ComplexPortal" id="CPX-6789">
    <property type="entry name" value="bZIP transcription factor complex, ATF7-NFE2"/>
</dbReference>
<dbReference type="ComplexPortal" id="CPX-6790">
    <property type="entry name" value="bZIP transcription factor complex, ATF7-NFE2L1"/>
</dbReference>
<dbReference type="CORUM" id="P17544"/>
<dbReference type="ELM" id="P17544"/>
<dbReference type="FunCoup" id="P17544">
    <property type="interactions" value="3203"/>
</dbReference>
<dbReference type="IntAct" id="P17544">
    <property type="interactions" value="48"/>
</dbReference>
<dbReference type="MINT" id="P17544"/>
<dbReference type="STRING" id="9606.ENSP00000399465"/>
<dbReference type="DrugBank" id="DB00852">
    <property type="generic name" value="Pseudoephedrine"/>
</dbReference>
<dbReference type="GlyGen" id="P17544">
    <property type="glycosylation" value="4 sites, 1 O-linked glycan (3 sites)"/>
</dbReference>
<dbReference type="iPTMnet" id="P17544"/>
<dbReference type="PhosphoSitePlus" id="P17544"/>
<dbReference type="BioMuta" id="ATF7"/>
<dbReference type="DMDM" id="12643393"/>
<dbReference type="jPOST" id="P17544"/>
<dbReference type="MassIVE" id="P17544"/>
<dbReference type="PaxDb" id="9606-ENSP00000399465"/>
<dbReference type="PeptideAtlas" id="P17544"/>
<dbReference type="ProteomicsDB" id="53487">
    <molecule id="P17544-1"/>
</dbReference>
<dbReference type="ProteomicsDB" id="53488">
    <molecule id="P17544-2"/>
</dbReference>
<dbReference type="ProteomicsDB" id="53489">
    <molecule id="P17544-3"/>
</dbReference>
<dbReference type="ProteomicsDB" id="53490">
    <molecule id="P17544-4"/>
</dbReference>
<dbReference type="ProteomicsDB" id="53491">
    <molecule id="P17544-5"/>
</dbReference>
<dbReference type="ProteomicsDB" id="53492">
    <molecule id="P17544-6"/>
</dbReference>
<dbReference type="Pumba" id="P17544"/>
<dbReference type="ABCD" id="P17544">
    <property type="antibodies" value="6 sequenced antibodies"/>
</dbReference>
<dbReference type="Antibodypedia" id="931">
    <property type="antibodies" value="285 antibodies from 34 providers"/>
</dbReference>
<dbReference type="DNASU" id="11016"/>
<dbReference type="Ensembl" id="ENST00000420353.7">
    <molecule id="P17544-6"/>
    <property type="protein sequence ID" value="ENSP00000399465.1"/>
    <property type="gene ID" value="ENSG00000170653.19"/>
</dbReference>
<dbReference type="Ensembl" id="ENST00000456903.8">
    <molecule id="P17544-6"/>
    <property type="protein sequence ID" value="ENSP00000387406.3"/>
    <property type="gene ID" value="ENSG00000170653.19"/>
</dbReference>
<dbReference type="Ensembl" id="ENST00000548118.6">
    <molecule id="P17544-5"/>
    <property type="protein sequence ID" value="ENSP00000456858.1"/>
    <property type="gene ID" value="ENSG00000170653.19"/>
</dbReference>
<dbReference type="Ensembl" id="ENST00000548446.6">
    <molecule id="P17544-1"/>
    <property type="protein sequence ID" value="ENSP00000449938.1"/>
    <property type="gene ID" value="ENSG00000170653.19"/>
</dbReference>
<dbReference type="Ensembl" id="ENST00000591397.1">
    <molecule id="P17544-5"/>
    <property type="protein sequence ID" value="ENSP00000465192.1"/>
    <property type="gene ID" value="ENSG00000170653.19"/>
</dbReference>
<dbReference type="GeneID" id="11016"/>
<dbReference type="KEGG" id="hsa:11016"/>
<dbReference type="MANE-Select" id="ENST00000420353.7">
    <property type="protein sequence ID" value="ENSP00000399465.1"/>
    <property type="RefSeq nucleotide sequence ID" value="NM_006856.3"/>
    <property type="RefSeq protein sequence ID" value="NP_006847.1"/>
</dbReference>
<dbReference type="UCSC" id="uc001sdz.4">
    <molecule id="P17544-6"/>
    <property type="organism name" value="human"/>
</dbReference>
<dbReference type="AGR" id="HGNC:792"/>
<dbReference type="CTD" id="11016"/>
<dbReference type="DisGeNET" id="11016"/>
<dbReference type="GeneCards" id="ATF7"/>
<dbReference type="HGNC" id="HGNC:792">
    <property type="gene designation" value="ATF7"/>
</dbReference>
<dbReference type="HPA" id="ENSG00000170653">
    <property type="expression patterns" value="Low tissue specificity"/>
</dbReference>
<dbReference type="MIM" id="606371">
    <property type="type" value="gene"/>
</dbReference>
<dbReference type="neXtProt" id="NX_P17544"/>
<dbReference type="OpenTargets" id="ENSG00000170653"/>
<dbReference type="PharmGKB" id="PA25092"/>
<dbReference type="VEuPathDB" id="HostDB:ENSG00000170653"/>
<dbReference type="eggNOG" id="KOG1414">
    <property type="taxonomic scope" value="Eukaryota"/>
</dbReference>
<dbReference type="GeneTree" id="ENSGT00940000155261"/>
<dbReference type="HOGENOM" id="CLU_021564_0_0_1"/>
<dbReference type="InParanoid" id="P17544"/>
<dbReference type="OMA" id="PNYEVEH"/>
<dbReference type="OrthoDB" id="295274at2759"/>
<dbReference type="PAN-GO" id="P17544">
    <property type="GO annotations" value="3 GO annotations based on evolutionary models"/>
</dbReference>
<dbReference type="PhylomeDB" id="P17544"/>
<dbReference type="PathwayCommons" id="P17544"/>
<dbReference type="SignaLink" id="P17544"/>
<dbReference type="SIGNOR" id="P17544"/>
<dbReference type="BioGRID-ORCS" id="11016">
    <property type="hits" value="43 hits in 1177 CRISPR screens"/>
</dbReference>
<dbReference type="ChiTaRS" id="ATF7">
    <property type="organism name" value="human"/>
</dbReference>
<dbReference type="GeneWiki" id="ATF7"/>
<dbReference type="GenomeRNAi" id="11016"/>
<dbReference type="Pharos" id="P17544">
    <property type="development level" value="Tbio"/>
</dbReference>
<dbReference type="PRO" id="PR:P17544"/>
<dbReference type="Proteomes" id="UP000005640">
    <property type="component" value="Chromosome 12"/>
</dbReference>
<dbReference type="RNAct" id="P17544">
    <property type="molecule type" value="protein"/>
</dbReference>
<dbReference type="Bgee" id="ENSG00000170653">
    <property type="expression patterns" value="Expressed in popliteal artery and 168 other cell types or tissues"/>
</dbReference>
<dbReference type="ExpressionAtlas" id="P17544">
    <property type="expression patterns" value="baseline and differential"/>
</dbReference>
<dbReference type="GO" id="GO:0000785">
    <property type="term" value="C:chromatin"/>
    <property type="evidence" value="ECO:0000247"/>
    <property type="project" value="NTNU_SB"/>
</dbReference>
<dbReference type="GO" id="GO:0000781">
    <property type="term" value="C:chromosome, telomeric region"/>
    <property type="evidence" value="ECO:0007669"/>
    <property type="project" value="UniProtKB-SubCell"/>
</dbReference>
<dbReference type="GO" id="GO:0005737">
    <property type="term" value="C:cytoplasm"/>
    <property type="evidence" value="ECO:0007669"/>
    <property type="project" value="UniProtKB-SubCell"/>
</dbReference>
<dbReference type="GO" id="GO:0005654">
    <property type="term" value="C:nucleoplasm"/>
    <property type="evidence" value="ECO:0000314"/>
    <property type="project" value="UniProtKB"/>
</dbReference>
<dbReference type="GO" id="GO:0005634">
    <property type="term" value="C:nucleus"/>
    <property type="evidence" value="ECO:0000303"/>
    <property type="project" value="UniProtKB"/>
</dbReference>
<dbReference type="GO" id="GO:0090575">
    <property type="term" value="C:RNA polymerase II transcription regulator complex"/>
    <property type="evidence" value="ECO:0000353"/>
    <property type="project" value="ComplexPortal"/>
</dbReference>
<dbReference type="GO" id="GO:0035497">
    <property type="term" value="F:cAMP response element binding"/>
    <property type="evidence" value="ECO:0000318"/>
    <property type="project" value="GO_Central"/>
</dbReference>
<dbReference type="GO" id="GO:0003700">
    <property type="term" value="F:DNA-binding transcription factor activity"/>
    <property type="evidence" value="ECO:0000303"/>
    <property type="project" value="ProtInc"/>
</dbReference>
<dbReference type="GO" id="GO:0000981">
    <property type="term" value="F:DNA-binding transcription factor activity, RNA polymerase II-specific"/>
    <property type="evidence" value="ECO:0000247"/>
    <property type="project" value="NTNU_SB"/>
</dbReference>
<dbReference type="GO" id="GO:0001227">
    <property type="term" value="F:DNA-binding transcription repressor activity, RNA polymerase II-specific"/>
    <property type="evidence" value="ECO:0000314"/>
    <property type="project" value="NTNU_SB"/>
</dbReference>
<dbReference type="GO" id="GO:0019899">
    <property type="term" value="F:enzyme binding"/>
    <property type="evidence" value="ECO:0000353"/>
    <property type="project" value="UniProtKB"/>
</dbReference>
<dbReference type="GO" id="GO:0051019">
    <property type="term" value="F:mitogen-activated protein kinase binding"/>
    <property type="evidence" value="ECO:0000314"/>
    <property type="project" value="UniProtKB"/>
</dbReference>
<dbReference type="GO" id="GO:0000978">
    <property type="term" value="F:RNA polymerase II cis-regulatory region sequence-specific DNA binding"/>
    <property type="evidence" value="ECO:0000314"/>
    <property type="project" value="NTNU_SB"/>
</dbReference>
<dbReference type="GO" id="GO:1990837">
    <property type="term" value="F:sequence-specific double-stranded DNA binding"/>
    <property type="evidence" value="ECO:0000314"/>
    <property type="project" value="ARUK-UCL"/>
</dbReference>
<dbReference type="GO" id="GO:0000976">
    <property type="term" value="F:transcription cis-regulatory region binding"/>
    <property type="evidence" value="ECO:0000314"/>
    <property type="project" value="UniProtKB"/>
</dbReference>
<dbReference type="GO" id="GO:0001223">
    <property type="term" value="F:transcription coactivator binding"/>
    <property type="evidence" value="ECO:0000314"/>
    <property type="project" value="UniProtKB"/>
</dbReference>
<dbReference type="GO" id="GO:0008270">
    <property type="term" value="F:zinc ion binding"/>
    <property type="evidence" value="ECO:0007669"/>
    <property type="project" value="UniProtKB-KW"/>
</dbReference>
<dbReference type="GO" id="GO:0000122">
    <property type="term" value="P:negative regulation of transcription by RNA polymerase II"/>
    <property type="evidence" value="ECO:0000314"/>
    <property type="project" value="NTNU_SB"/>
</dbReference>
<dbReference type="GO" id="GO:0045944">
    <property type="term" value="P:positive regulation of transcription by RNA polymerase II"/>
    <property type="evidence" value="ECO:0000314"/>
    <property type="project" value="UniProtKB"/>
</dbReference>
<dbReference type="GO" id="GO:0006355">
    <property type="term" value="P:regulation of DNA-templated transcription"/>
    <property type="evidence" value="ECO:0000314"/>
    <property type="project" value="UniProtKB"/>
</dbReference>
<dbReference type="GO" id="GO:0006357">
    <property type="term" value="P:regulation of transcription by RNA polymerase II"/>
    <property type="evidence" value="ECO:0000318"/>
    <property type="project" value="GO_Central"/>
</dbReference>
<dbReference type="CDD" id="cd14687">
    <property type="entry name" value="bZIP_ATF2"/>
    <property type="match status" value="1"/>
</dbReference>
<dbReference type="CDD" id="cd12192">
    <property type="entry name" value="GCN4_cent"/>
    <property type="match status" value="1"/>
</dbReference>
<dbReference type="FunFam" id="1.20.5.170:FF:000010">
    <property type="entry name" value="Cyclic AMP-dependent transcription factor ATF-2"/>
    <property type="match status" value="1"/>
</dbReference>
<dbReference type="Gene3D" id="1.20.5.170">
    <property type="match status" value="1"/>
</dbReference>
<dbReference type="Gene3D" id="3.30.160.60">
    <property type="entry name" value="Classic Zinc Finger"/>
    <property type="match status" value="1"/>
</dbReference>
<dbReference type="InterPro" id="IPR004827">
    <property type="entry name" value="bZIP"/>
</dbReference>
<dbReference type="InterPro" id="IPR046347">
    <property type="entry name" value="bZIP_sf"/>
</dbReference>
<dbReference type="InterPro" id="IPR051027">
    <property type="entry name" value="bZIP_transcription_factors"/>
</dbReference>
<dbReference type="InterPro" id="IPR016378">
    <property type="entry name" value="TF_CRE-BP1-typ"/>
</dbReference>
<dbReference type="InterPro" id="IPR036236">
    <property type="entry name" value="Znf_C2H2_sf"/>
</dbReference>
<dbReference type="InterPro" id="IPR013087">
    <property type="entry name" value="Znf_C2H2_type"/>
</dbReference>
<dbReference type="PANTHER" id="PTHR19304">
    <property type="entry name" value="CYCLIC-AMP RESPONSE ELEMENT BINDING PROTEIN"/>
    <property type="match status" value="1"/>
</dbReference>
<dbReference type="Pfam" id="PF00170">
    <property type="entry name" value="bZIP_1"/>
    <property type="match status" value="1"/>
</dbReference>
<dbReference type="PIRSF" id="PIRSF003153">
    <property type="entry name" value="ATF2_CRE-BP1"/>
    <property type="match status" value="1"/>
</dbReference>
<dbReference type="SMART" id="SM00338">
    <property type="entry name" value="BRLZ"/>
    <property type="match status" value="1"/>
</dbReference>
<dbReference type="SMART" id="SM00355">
    <property type="entry name" value="ZnF_C2H2"/>
    <property type="match status" value="1"/>
</dbReference>
<dbReference type="SUPFAM" id="SSF57667">
    <property type="entry name" value="beta-beta-alpha zinc fingers"/>
    <property type="match status" value="1"/>
</dbReference>
<dbReference type="SUPFAM" id="SSF57959">
    <property type="entry name" value="Leucine zipper domain"/>
    <property type="match status" value="1"/>
</dbReference>
<dbReference type="PROSITE" id="PS50217">
    <property type="entry name" value="BZIP"/>
    <property type="match status" value="1"/>
</dbReference>
<dbReference type="PROSITE" id="PS00036">
    <property type="entry name" value="BZIP_BASIC"/>
    <property type="match status" value="1"/>
</dbReference>
<dbReference type="PROSITE" id="PS00028">
    <property type="entry name" value="ZINC_FINGER_C2H2_1"/>
    <property type="match status" value="1"/>
</dbReference>
<dbReference type="PROSITE" id="PS50157">
    <property type="entry name" value="ZINC_FINGER_C2H2_2"/>
    <property type="match status" value="1"/>
</dbReference>
<sequence length="483" mass="51757">MGDDRPFVCNAPGCGQRFTNEDHLAVHKHKHEMTLKFGPARTDSVIIADQTPTPTRFLKNCEEVGLFNELASSFEHEFKKAADEDEKKAAAGPLDMSLPSTPDIKIKEEEPVEVDSSPPDSPASSPCSPPLKEKEVTPKPVLISTPTPTIVRPGSLPLHLGYDPLHPTLPSPTSVITQAPPSNRQMGSPTGSLPLVMHLANGQTMPVLPGPPVQMPSVISLARPVSMVPNIPGIPGPPVNSSGSISPSGHPIPSEAKMRLKATLTHQVSSINGGCGMVVGTASTMVTARPEQSQILIQHPDAPSPAQPQVSPAQPTPSTGGRRRRTVDEDPDERRQRFLERNRAAASRCRQKRKLWVSSLEKKAEELTSQNIQLSNEVTLLRNEVAQLKQLLLAHKDCPVTALQKKTQGYLESPKESSEPTGSPAPVIQHSSATAPSNGLSVRSAAEAVATSVLTQMASQRTELSMPIQSHVIMTPQSQSAGR</sequence>
<protein>
    <recommendedName>
        <fullName>Cyclic AMP-dependent transcription factor ATF-7</fullName>
        <shortName>cAMP-dependent transcription factor ATF-7</shortName>
    </recommendedName>
    <alternativeName>
        <fullName>Activating transcription factor 7</fullName>
    </alternativeName>
    <alternativeName>
        <fullName>Transcription factor ATF-A</fullName>
    </alternativeName>
</protein>